<feature type="chain" id="PRO_1000053242" description="ATP synthase gamma chain">
    <location>
        <begin position="1"/>
        <end position="288"/>
    </location>
</feature>
<organism>
    <name type="scientific">Legionella pneumophila (strain Corby)</name>
    <dbReference type="NCBI Taxonomy" id="400673"/>
    <lineage>
        <taxon>Bacteria</taxon>
        <taxon>Pseudomonadati</taxon>
        <taxon>Pseudomonadota</taxon>
        <taxon>Gammaproteobacteria</taxon>
        <taxon>Legionellales</taxon>
        <taxon>Legionellaceae</taxon>
        <taxon>Legionella</taxon>
    </lineage>
</organism>
<accession>A5III4</accession>
<gene>
    <name evidence="1" type="primary">atpG</name>
    <name type="ordered locus">LPC_3298</name>
</gene>
<protein>
    <recommendedName>
        <fullName evidence="1">ATP synthase gamma chain</fullName>
    </recommendedName>
    <alternativeName>
        <fullName evidence="1">ATP synthase F1 sector gamma subunit</fullName>
    </alternativeName>
    <alternativeName>
        <fullName evidence="1">F-ATPase gamma subunit</fullName>
    </alternativeName>
</protein>
<proteinExistence type="inferred from homology"/>
<dbReference type="EMBL" id="CP000675">
    <property type="protein sequence ID" value="ABQ57184.1"/>
    <property type="molecule type" value="Genomic_DNA"/>
</dbReference>
<dbReference type="RefSeq" id="WP_010948667.1">
    <property type="nucleotide sequence ID" value="NZ_JAPMSS010000003.1"/>
</dbReference>
<dbReference type="SMR" id="A5III4"/>
<dbReference type="GeneID" id="57036989"/>
<dbReference type="KEGG" id="lpc:LPC_3298"/>
<dbReference type="HOGENOM" id="CLU_050669_0_1_6"/>
<dbReference type="GO" id="GO:0005886">
    <property type="term" value="C:plasma membrane"/>
    <property type="evidence" value="ECO:0007669"/>
    <property type="project" value="UniProtKB-SubCell"/>
</dbReference>
<dbReference type="GO" id="GO:0045259">
    <property type="term" value="C:proton-transporting ATP synthase complex"/>
    <property type="evidence" value="ECO:0007669"/>
    <property type="project" value="UniProtKB-KW"/>
</dbReference>
<dbReference type="GO" id="GO:0005524">
    <property type="term" value="F:ATP binding"/>
    <property type="evidence" value="ECO:0007669"/>
    <property type="project" value="UniProtKB-UniRule"/>
</dbReference>
<dbReference type="GO" id="GO:0046933">
    <property type="term" value="F:proton-transporting ATP synthase activity, rotational mechanism"/>
    <property type="evidence" value="ECO:0007669"/>
    <property type="project" value="UniProtKB-UniRule"/>
</dbReference>
<dbReference type="GO" id="GO:0042777">
    <property type="term" value="P:proton motive force-driven plasma membrane ATP synthesis"/>
    <property type="evidence" value="ECO:0007669"/>
    <property type="project" value="UniProtKB-UniRule"/>
</dbReference>
<dbReference type="CDD" id="cd12151">
    <property type="entry name" value="F1-ATPase_gamma"/>
    <property type="match status" value="1"/>
</dbReference>
<dbReference type="FunFam" id="1.10.287.80:FF:000005">
    <property type="entry name" value="ATP synthase gamma chain"/>
    <property type="match status" value="1"/>
</dbReference>
<dbReference type="FunFam" id="3.40.1380.10:FF:000006">
    <property type="entry name" value="ATP synthase gamma chain"/>
    <property type="match status" value="1"/>
</dbReference>
<dbReference type="Gene3D" id="3.40.1380.10">
    <property type="match status" value="1"/>
</dbReference>
<dbReference type="Gene3D" id="1.10.287.80">
    <property type="entry name" value="ATP synthase, gamma subunit, helix hairpin domain"/>
    <property type="match status" value="2"/>
</dbReference>
<dbReference type="HAMAP" id="MF_00815">
    <property type="entry name" value="ATP_synth_gamma_bact"/>
    <property type="match status" value="1"/>
</dbReference>
<dbReference type="InterPro" id="IPR035968">
    <property type="entry name" value="ATP_synth_F1_ATPase_gsu"/>
</dbReference>
<dbReference type="InterPro" id="IPR000131">
    <property type="entry name" value="ATP_synth_F1_gsu"/>
</dbReference>
<dbReference type="InterPro" id="IPR023632">
    <property type="entry name" value="ATP_synth_F1_gsu_CS"/>
</dbReference>
<dbReference type="NCBIfam" id="TIGR01146">
    <property type="entry name" value="ATPsyn_F1gamma"/>
    <property type="match status" value="1"/>
</dbReference>
<dbReference type="NCBIfam" id="NF004144">
    <property type="entry name" value="PRK05621.1-1"/>
    <property type="match status" value="1"/>
</dbReference>
<dbReference type="PANTHER" id="PTHR11693">
    <property type="entry name" value="ATP SYNTHASE GAMMA CHAIN"/>
    <property type="match status" value="1"/>
</dbReference>
<dbReference type="PANTHER" id="PTHR11693:SF22">
    <property type="entry name" value="ATP SYNTHASE SUBUNIT GAMMA, MITOCHONDRIAL"/>
    <property type="match status" value="1"/>
</dbReference>
<dbReference type="Pfam" id="PF00231">
    <property type="entry name" value="ATP-synt"/>
    <property type="match status" value="1"/>
</dbReference>
<dbReference type="PRINTS" id="PR00126">
    <property type="entry name" value="ATPASEGAMMA"/>
</dbReference>
<dbReference type="SUPFAM" id="SSF52943">
    <property type="entry name" value="ATP synthase (F1-ATPase), gamma subunit"/>
    <property type="match status" value="1"/>
</dbReference>
<dbReference type="PROSITE" id="PS00153">
    <property type="entry name" value="ATPASE_GAMMA"/>
    <property type="match status" value="1"/>
</dbReference>
<evidence type="ECO:0000255" key="1">
    <source>
        <dbReference type="HAMAP-Rule" id="MF_00815"/>
    </source>
</evidence>
<reference key="1">
    <citation type="submission" date="2006-11" db="EMBL/GenBank/DDBJ databases">
        <title>Identification and characterization of a new conjugation/ type IVA secretion system (trb/tra) of L. pneumophila Corby localized on a mobile genomic island.</title>
        <authorList>
            <person name="Gloeckner G."/>
            <person name="Albert-Weissenberger C."/>
            <person name="Weinmann E."/>
            <person name="Jacobi S."/>
            <person name="Schunder E."/>
            <person name="Steinert M."/>
            <person name="Buchrieser C."/>
            <person name="Hacker J."/>
            <person name="Heuner K."/>
        </authorList>
    </citation>
    <scope>NUCLEOTIDE SEQUENCE [LARGE SCALE GENOMIC DNA]</scope>
    <source>
        <strain>Corby</strain>
    </source>
</reference>
<name>ATPG_LEGPC</name>
<sequence length="288" mass="32590">MAGAKEIRSKISSINKTRKITRAMEMVAASKMRKTQERMRASKPYANKIYEVIKHIARAASEYRHPFMSEREIKRIGIIVVTTDRGLCGGLNSNLFRETIRTIRNWQEHGKEVDIAVIGRKGQAFFRRVGGNILGSIDHLGDTPSINDFIGVVKIMLDAYYNGTIDSLHIVYNEFINTMTQKPFVKQLLPLPKSEEDKKTLGHHWDYIYEPEAKELLDEILERYIELQVYQAVVENIACEQAAKMIAMKSATDNAGDLIKEFQLAYNKARQAAITQELAEIVGGAAAL</sequence>
<comment type="function">
    <text evidence="1">Produces ATP from ADP in the presence of a proton gradient across the membrane. The gamma chain is believed to be important in regulating ATPase activity and the flow of protons through the CF(0) complex.</text>
</comment>
<comment type="subunit">
    <text evidence="1">F-type ATPases have 2 components, CF(1) - the catalytic core - and CF(0) - the membrane proton channel. CF(1) has five subunits: alpha(3), beta(3), gamma(1), delta(1), epsilon(1). CF(0) has three main subunits: a, b and c.</text>
</comment>
<comment type="subcellular location">
    <subcellularLocation>
        <location evidence="1">Cell inner membrane</location>
        <topology evidence="1">Peripheral membrane protein</topology>
    </subcellularLocation>
</comment>
<comment type="similarity">
    <text evidence="1">Belongs to the ATPase gamma chain family.</text>
</comment>
<keyword id="KW-0066">ATP synthesis</keyword>
<keyword id="KW-0997">Cell inner membrane</keyword>
<keyword id="KW-1003">Cell membrane</keyword>
<keyword id="KW-0139">CF(1)</keyword>
<keyword id="KW-0375">Hydrogen ion transport</keyword>
<keyword id="KW-0406">Ion transport</keyword>
<keyword id="KW-0472">Membrane</keyword>
<keyword id="KW-0813">Transport</keyword>